<gene>
    <name evidence="1" type="primary">allA</name>
    <name type="ordered locus">STM0515</name>
</gene>
<feature type="chain" id="PRO_0000120558" description="Ureidoglycolate lyase">
    <location>
        <begin position="1"/>
        <end position="160"/>
    </location>
</feature>
<reference key="1">
    <citation type="journal article" date="2001" name="Nature">
        <title>Complete genome sequence of Salmonella enterica serovar Typhimurium LT2.</title>
        <authorList>
            <person name="McClelland M."/>
            <person name="Sanderson K.E."/>
            <person name="Spieth J."/>
            <person name="Clifton S.W."/>
            <person name="Latreille P."/>
            <person name="Courtney L."/>
            <person name="Porwollik S."/>
            <person name="Ali J."/>
            <person name="Dante M."/>
            <person name="Du F."/>
            <person name="Hou S."/>
            <person name="Layman D."/>
            <person name="Leonard S."/>
            <person name="Nguyen C."/>
            <person name="Scott K."/>
            <person name="Holmes A."/>
            <person name="Grewal N."/>
            <person name="Mulvaney E."/>
            <person name="Ryan E."/>
            <person name="Sun H."/>
            <person name="Florea L."/>
            <person name="Miller W."/>
            <person name="Stoneking T."/>
            <person name="Nhan M."/>
            <person name="Waterston R."/>
            <person name="Wilson R.K."/>
        </authorList>
    </citation>
    <scope>NUCLEOTIDE SEQUENCE [LARGE SCALE GENOMIC DNA]</scope>
    <source>
        <strain>LT2 / SGSC1412 / ATCC 700720</strain>
    </source>
</reference>
<keyword id="KW-0456">Lyase</keyword>
<keyword id="KW-0659">Purine metabolism</keyword>
<keyword id="KW-1185">Reference proteome</keyword>
<evidence type="ECO:0000255" key="1">
    <source>
        <dbReference type="HAMAP-Rule" id="MF_00616"/>
    </source>
</evidence>
<name>ALLA_SALTY</name>
<sequence length="160" mass="18139">MKLEVLPLDQKTFSAYGDVIETQEREFFHINNGLVERYHDLAKVEVLEQDRTLISINRAQPAAMPIVVHELERHPLGTQAFVPMNGEAFVVIVALGDDKPDLSTLRAFISNGRQGVNYHRNVWHHPLFAWQTVTDFLTVDRGGSDNCDVESIPTHELCFA</sequence>
<dbReference type="EC" id="4.3.2.3" evidence="1"/>
<dbReference type="EMBL" id="AE006468">
    <property type="protein sequence ID" value="AAL19469.1"/>
    <property type="molecule type" value="Genomic_DNA"/>
</dbReference>
<dbReference type="RefSeq" id="NP_459510.1">
    <property type="nucleotide sequence ID" value="NC_003197.2"/>
</dbReference>
<dbReference type="RefSeq" id="WP_000764664.1">
    <property type="nucleotide sequence ID" value="NC_003197.2"/>
</dbReference>
<dbReference type="SMR" id="Q8ZR87"/>
<dbReference type="STRING" id="99287.STM0515"/>
<dbReference type="PaxDb" id="99287-STM0515"/>
<dbReference type="GeneID" id="1252035"/>
<dbReference type="KEGG" id="stm:STM0515"/>
<dbReference type="PATRIC" id="fig|99287.12.peg.549"/>
<dbReference type="HOGENOM" id="CLU_070848_1_1_6"/>
<dbReference type="OMA" id="ECYFEPG"/>
<dbReference type="PhylomeDB" id="Q8ZR87"/>
<dbReference type="BioCyc" id="SENT99287:STM0515-MONOMER"/>
<dbReference type="UniPathway" id="UPA00395"/>
<dbReference type="Proteomes" id="UP000001014">
    <property type="component" value="Chromosome"/>
</dbReference>
<dbReference type="GO" id="GO:0004848">
    <property type="term" value="F:ureidoglycolate hydrolase activity"/>
    <property type="evidence" value="ECO:0007669"/>
    <property type="project" value="InterPro"/>
</dbReference>
<dbReference type="GO" id="GO:0050385">
    <property type="term" value="F:ureidoglycolate lyase activity"/>
    <property type="evidence" value="ECO:0000318"/>
    <property type="project" value="GO_Central"/>
</dbReference>
<dbReference type="GO" id="GO:0000256">
    <property type="term" value="P:allantoin catabolic process"/>
    <property type="evidence" value="ECO:0007669"/>
    <property type="project" value="UniProtKB-UniRule"/>
</dbReference>
<dbReference type="GO" id="GO:0006145">
    <property type="term" value="P:purine nucleobase catabolic process"/>
    <property type="evidence" value="ECO:0007669"/>
    <property type="project" value="UniProtKB-UniRule"/>
</dbReference>
<dbReference type="CDD" id="cd20298">
    <property type="entry name" value="cupin_UAH"/>
    <property type="match status" value="1"/>
</dbReference>
<dbReference type="FunFam" id="2.60.120.480:FF:000001">
    <property type="entry name" value="Ureidoglycolate lyase"/>
    <property type="match status" value="1"/>
</dbReference>
<dbReference type="Gene3D" id="2.60.120.480">
    <property type="entry name" value="Ureidoglycolate hydrolase"/>
    <property type="match status" value="1"/>
</dbReference>
<dbReference type="HAMAP" id="MF_00616">
    <property type="entry name" value="Ureidogly_lyase"/>
    <property type="match status" value="1"/>
</dbReference>
<dbReference type="InterPro" id="IPR011051">
    <property type="entry name" value="RmlC_Cupin_sf"/>
</dbReference>
<dbReference type="InterPro" id="IPR047233">
    <property type="entry name" value="UAH_cupin"/>
</dbReference>
<dbReference type="InterPro" id="IPR007247">
    <property type="entry name" value="Ureidogly_lyase"/>
</dbReference>
<dbReference type="InterPro" id="IPR023525">
    <property type="entry name" value="Ureidogly_lyase_bac"/>
</dbReference>
<dbReference type="InterPro" id="IPR024060">
    <property type="entry name" value="Ureidoglycolate_lyase_dom_sf"/>
</dbReference>
<dbReference type="NCBIfam" id="NF002948">
    <property type="entry name" value="PRK03606.1-1"/>
    <property type="match status" value="1"/>
</dbReference>
<dbReference type="NCBIfam" id="NF009932">
    <property type="entry name" value="PRK13395.1"/>
    <property type="match status" value="1"/>
</dbReference>
<dbReference type="PANTHER" id="PTHR21221">
    <property type="entry name" value="UREIDOGLYCOLATE HYDROLASE"/>
    <property type="match status" value="1"/>
</dbReference>
<dbReference type="PANTHER" id="PTHR21221:SF1">
    <property type="entry name" value="UREIDOGLYCOLATE LYASE"/>
    <property type="match status" value="1"/>
</dbReference>
<dbReference type="Pfam" id="PF04115">
    <property type="entry name" value="Ureidogly_lyase"/>
    <property type="match status" value="1"/>
</dbReference>
<dbReference type="PIRSF" id="PIRSF017306">
    <property type="entry name" value="Ureidogly_hydro"/>
    <property type="match status" value="1"/>
</dbReference>
<dbReference type="SUPFAM" id="SSF51182">
    <property type="entry name" value="RmlC-like cupins"/>
    <property type="match status" value="1"/>
</dbReference>
<comment type="function">
    <text evidence="1">Catalyzes the catabolism of the allantoin degradation intermediate (S)-ureidoglycolate, generating urea and glyoxylate. Involved in the utilization of allantoin as nitrogen source.</text>
</comment>
<comment type="catalytic activity">
    <reaction evidence="1">
        <text>(S)-ureidoglycolate = urea + glyoxylate</text>
        <dbReference type="Rhea" id="RHEA:11304"/>
        <dbReference type="ChEBI" id="CHEBI:16199"/>
        <dbReference type="ChEBI" id="CHEBI:36655"/>
        <dbReference type="ChEBI" id="CHEBI:57296"/>
        <dbReference type="EC" id="4.3.2.3"/>
    </reaction>
</comment>
<comment type="cofactor">
    <cofactor evidence="1">
        <name>Ni(2+)</name>
        <dbReference type="ChEBI" id="CHEBI:49786"/>
    </cofactor>
</comment>
<comment type="pathway">
    <text evidence="1">Nitrogen metabolism; (S)-allantoin degradation.</text>
</comment>
<comment type="subunit">
    <text evidence="1">Homodimer.</text>
</comment>
<comment type="similarity">
    <text evidence="1">Belongs to the ureidoglycolate lyase family.</text>
</comment>
<proteinExistence type="inferred from homology"/>
<organism>
    <name type="scientific">Salmonella typhimurium (strain LT2 / SGSC1412 / ATCC 700720)</name>
    <dbReference type="NCBI Taxonomy" id="99287"/>
    <lineage>
        <taxon>Bacteria</taxon>
        <taxon>Pseudomonadati</taxon>
        <taxon>Pseudomonadota</taxon>
        <taxon>Gammaproteobacteria</taxon>
        <taxon>Enterobacterales</taxon>
        <taxon>Enterobacteriaceae</taxon>
        <taxon>Salmonella</taxon>
    </lineage>
</organism>
<protein>
    <recommendedName>
        <fullName evidence="1">Ureidoglycolate lyase</fullName>
        <ecNumber evidence="1">4.3.2.3</ecNumber>
    </recommendedName>
    <alternativeName>
        <fullName evidence="1">Ureidoglycolatase</fullName>
    </alternativeName>
</protein>
<accession>Q8ZR87</accession>